<protein>
    <recommendedName>
        <fullName>Differentially expressed in FDCP 8 homolog</fullName>
        <shortName>DEF-8</shortName>
    </recommendedName>
</protein>
<accession>A5PJM7</accession>
<dbReference type="EMBL" id="BC142174">
    <property type="protein sequence ID" value="AAI42175.1"/>
    <property type="molecule type" value="mRNA"/>
</dbReference>
<dbReference type="RefSeq" id="NP_001092427.1">
    <property type="nucleotide sequence ID" value="NM_001098957.1"/>
</dbReference>
<dbReference type="RefSeq" id="XP_024833943.1">
    <property type="nucleotide sequence ID" value="XM_024978175.2"/>
</dbReference>
<dbReference type="RefSeq" id="XP_059732644.1">
    <property type="nucleotide sequence ID" value="XM_059876661.1"/>
</dbReference>
<dbReference type="SMR" id="A5PJM7"/>
<dbReference type="FunCoup" id="A5PJM7">
    <property type="interactions" value="636"/>
</dbReference>
<dbReference type="STRING" id="9913.ENSBTAP00000062305"/>
<dbReference type="PaxDb" id="9913-ENSBTAP00000004669"/>
<dbReference type="Ensembl" id="ENSBTAT00000004669.6">
    <property type="protein sequence ID" value="ENSBTAP00000004669.6"/>
    <property type="gene ID" value="ENSBTAG00000039014.4"/>
</dbReference>
<dbReference type="GeneID" id="513349"/>
<dbReference type="KEGG" id="bta:513349"/>
<dbReference type="CTD" id="54849"/>
<dbReference type="VEuPathDB" id="HostDB:ENSBTAG00000039014"/>
<dbReference type="VGNC" id="VGNC:27987">
    <property type="gene designation" value="DEF8"/>
</dbReference>
<dbReference type="eggNOG" id="KOG1829">
    <property type="taxonomic scope" value="Eukaryota"/>
</dbReference>
<dbReference type="GeneTree" id="ENSGT00940000159182"/>
<dbReference type="InParanoid" id="A5PJM7"/>
<dbReference type="OrthoDB" id="1918044at2759"/>
<dbReference type="Proteomes" id="UP000009136">
    <property type="component" value="Chromosome 18"/>
</dbReference>
<dbReference type="Bgee" id="ENSBTAG00000039014">
    <property type="expression patterns" value="Expressed in neutrophil and 103 other cell types or tissues"/>
</dbReference>
<dbReference type="GO" id="GO:0008270">
    <property type="term" value="F:zinc ion binding"/>
    <property type="evidence" value="ECO:0007669"/>
    <property type="project" value="UniProtKB-KW"/>
</dbReference>
<dbReference type="GO" id="GO:0032418">
    <property type="term" value="P:lysosome localization"/>
    <property type="evidence" value="ECO:0000250"/>
    <property type="project" value="UniProtKB"/>
</dbReference>
<dbReference type="GO" id="GO:0045780">
    <property type="term" value="P:positive regulation of bone resorption"/>
    <property type="evidence" value="ECO:0000250"/>
    <property type="project" value="UniProtKB"/>
</dbReference>
<dbReference type="GO" id="GO:1900029">
    <property type="term" value="P:positive regulation of ruffle assembly"/>
    <property type="evidence" value="ECO:0000250"/>
    <property type="project" value="UniProtKB"/>
</dbReference>
<dbReference type="CDD" id="cd20819">
    <property type="entry name" value="C1_DEF8"/>
    <property type="match status" value="1"/>
</dbReference>
<dbReference type="FunFam" id="3.30.60.20:FF:000042">
    <property type="entry name" value="differentially expressed in FDCP 8 homolog isoform X2"/>
    <property type="match status" value="1"/>
</dbReference>
<dbReference type="Gene3D" id="3.30.60.20">
    <property type="match status" value="1"/>
</dbReference>
<dbReference type="InterPro" id="IPR046349">
    <property type="entry name" value="C1-like_sf"/>
</dbReference>
<dbReference type="InterPro" id="IPR051366">
    <property type="entry name" value="DEF8"/>
</dbReference>
<dbReference type="InterPro" id="IPR047983">
    <property type="entry name" value="DEF8_C1"/>
</dbReference>
<dbReference type="InterPro" id="IPR002219">
    <property type="entry name" value="PE/DAG-bd"/>
</dbReference>
<dbReference type="InterPro" id="IPR025258">
    <property type="entry name" value="RH_dom"/>
</dbReference>
<dbReference type="PANTHER" id="PTHR12326:SF3">
    <property type="entry name" value="DIFFERENTIALLY EXPRESSED IN FDCP 8 HOMOLOG"/>
    <property type="match status" value="1"/>
</dbReference>
<dbReference type="PANTHER" id="PTHR12326">
    <property type="entry name" value="PLECKSTRIN HOMOLOGY DOMAIN CONTAINING PROTEIN"/>
    <property type="match status" value="1"/>
</dbReference>
<dbReference type="Pfam" id="PF00130">
    <property type="entry name" value="C1_1"/>
    <property type="match status" value="1"/>
</dbReference>
<dbReference type="Pfam" id="PF13901">
    <property type="entry name" value="RH_dom"/>
    <property type="match status" value="1"/>
</dbReference>
<dbReference type="SMART" id="SM00109">
    <property type="entry name" value="C1"/>
    <property type="match status" value="2"/>
</dbReference>
<dbReference type="SMART" id="SM01175">
    <property type="entry name" value="DUF4206"/>
    <property type="match status" value="1"/>
</dbReference>
<dbReference type="SUPFAM" id="SSF57889">
    <property type="entry name" value="Cysteine-rich domain"/>
    <property type="match status" value="1"/>
</dbReference>
<dbReference type="PROSITE" id="PS00479">
    <property type="entry name" value="ZF_DAG_PE_1"/>
    <property type="match status" value="1"/>
</dbReference>
<dbReference type="PROSITE" id="PS50081">
    <property type="entry name" value="ZF_DAG_PE_2"/>
    <property type="match status" value="1"/>
</dbReference>
<comment type="function">
    <text evidence="1">Positively regulates lysosome peripheral distribution and ruffled border formation in osteoclasts. Involved in bone resorption.</text>
</comment>
<comment type="subunit">
    <text evidence="1">Interacts (via C-terminus) with PLEKHM1; this interaction is weak but increased in a RAB7A-dependent manner.</text>
</comment>
<comment type="similarity">
    <text evidence="4">Belongs to the DEF8 family.</text>
</comment>
<organism>
    <name type="scientific">Bos taurus</name>
    <name type="common">Bovine</name>
    <dbReference type="NCBI Taxonomy" id="9913"/>
    <lineage>
        <taxon>Eukaryota</taxon>
        <taxon>Metazoa</taxon>
        <taxon>Chordata</taxon>
        <taxon>Craniata</taxon>
        <taxon>Vertebrata</taxon>
        <taxon>Euteleostomi</taxon>
        <taxon>Mammalia</taxon>
        <taxon>Eutheria</taxon>
        <taxon>Laurasiatheria</taxon>
        <taxon>Artiodactyla</taxon>
        <taxon>Ruminantia</taxon>
        <taxon>Pecora</taxon>
        <taxon>Bovidae</taxon>
        <taxon>Bovinae</taxon>
        <taxon>Bos</taxon>
    </lineage>
</organism>
<gene>
    <name type="primary">DEF8</name>
</gene>
<evidence type="ECO:0000250" key="1">
    <source>
        <dbReference type="UniProtKB" id="Q99J78"/>
    </source>
</evidence>
<evidence type="ECO:0000255" key="2">
    <source>
        <dbReference type="PROSITE-ProRule" id="PRU00226"/>
    </source>
</evidence>
<evidence type="ECO:0000256" key="3">
    <source>
        <dbReference type="SAM" id="MobiDB-lite"/>
    </source>
</evidence>
<evidence type="ECO:0000305" key="4"/>
<keyword id="KW-0479">Metal-binding</keyword>
<keyword id="KW-0597">Phosphoprotein</keyword>
<keyword id="KW-1185">Reference proteome</keyword>
<keyword id="KW-0677">Repeat</keyword>
<keyword id="KW-0862">Zinc</keyword>
<keyword id="KW-0863">Zinc-finger</keyword>
<proteinExistence type="evidence at transcript level"/>
<reference key="1">
    <citation type="submission" date="2007-06" db="EMBL/GenBank/DDBJ databases">
        <authorList>
            <consortium name="NIH - Mammalian Gene Collection (MGC) project"/>
        </authorList>
    </citation>
    <scope>NUCLEOTIDE SEQUENCE [LARGE SCALE MRNA]</scope>
    <source>
        <strain>Hereford</strain>
        <tissue>Hippocampus</tissue>
    </source>
</reference>
<sequence length="447" mass="51847">MEYDEKLARFRQVHLNPFNKQQHEQGAGEEAPGITSQARLPELPPGEPEFRCPERVMDLGLSEDHFARPVGLFLASDVQQLRQAIQECKQVILDLPEHSEKQKDAVVRLIHLRLKLQELKDPNEDEPNIRVLLEHRFYKEKSKSVKQTCDKCNTVIWGLIQTWYTCTGCYYRCHSKCLNLISKPCVRSKVSHQAEYELNICPEAGLDSQDYRCAECRAPISLRGVPSEARQCDYTGQYYCSHCHWNDLAVIPARVVHNWDFEPRKVSRGSMRYLALMMSRPVLRLREINPLLFNYVEELVEIRKLRQDILLMKPYFITCREAMAARLLLQLQDRQHFVENDEMYSVQDLLDTHTGRLGCSLAETHTLFAKHIKLDCERCQAKGFVCELCREGDVLFPFDSHTSVCADCSAVFHRDCYYDNSTTCPRCARLTLRKQSLFREPGPDLDA</sequence>
<feature type="chain" id="PRO_0000321912" description="Differentially expressed in FDCP 8 homolog">
    <location>
        <begin position="1"/>
        <end position="447"/>
    </location>
</feature>
<feature type="zinc finger region" description="Phorbol-ester/DAG-type 1" evidence="2">
    <location>
        <begin position="134"/>
        <end position="185"/>
    </location>
</feature>
<feature type="zinc finger region" description="Phorbol-ester/DAG-type 2" evidence="2">
    <location>
        <begin position="364"/>
        <end position="424"/>
    </location>
</feature>
<feature type="region of interest" description="Disordered" evidence="3">
    <location>
        <begin position="17"/>
        <end position="47"/>
    </location>
</feature>
<feature type="modified residue" description="Phosphoserine" evidence="1">
    <location>
        <position position="436"/>
    </location>
</feature>
<name>DEFI8_BOVIN</name>